<evidence type="ECO:0000250" key="1"/>
<evidence type="ECO:0000255" key="2">
    <source>
        <dbReference type="PROSITE-ProRule" id="PRU00159"/>
    </source>
</evidence>
<evidence type="ECO:0000255" key="3">
    <source>
        <dbReference type="PROSITE-ProRule" id="PRU10027"/>
    </source>
</evidence>
<evidence type="ECO:0000305" key="4"/>
<comment type="function">
    <text>Plays a key role in the control of the eukaryotic cell cycle. Component of the kinase complex that phosphorylates the repetitive C-terminus of RNA polymerase II.</text>
</comment>
<comment type="catalytic activity">
    <reaction>
        <text>L-seryl-[protein] + ATP = O-phospho-L-seryl-[protein] + ADP + H(+)</text>
        <dbReference type="Rhea" id="RHEA:17989"/>
        <dbReference type="Rhea" id="RHEA-COMP:9863"/>
        <dbReference type="Rhea" id="RHEA-COMP:11604"/>
        <dbReference type="ChEBI" id="CHEBI:15378"/>
        <dbReference type="ChEBI" id="CHEBI:29999"/>
        <dbReference type="ChEBI" id="CHEBI:30616"/>
        <dbReference type="ChEBI" id="CHEBI:83421"/>
        <dbReference type="ChEBI" id="CHEBI:456216"/>
        <dbReference type="EC" id="2.7.11.22"/>
    </reaction>
</comment>
<comment type="catalytic activity">
    <reaction>
        <text>L-threonyl-[protein] + ATP = O-phospho-L-threonyl-[protein] + ADP + H(+)</text>
        <dbReference type="Rhea" id="RHEA:46608"/>
        <dbReference type="Rhea" id="RHEA-COMP:11060"/>
        <dbReference type="Rhea" id="RHEA-COMP:11605"/>
        <dbReference type="ChEBI" id="CHEBI:15378"/>
        <dbReference type="ChEBI" id="CHEBI:30013"/>
        <dbReference type="ChEBI" id="CHEBI:30616"/>
        <dbReference type="ChEBI" id="CHEBI:61977"/>
        <dbReference type="ChEBI" id="CHEBI:456216"/>
        <dbReference type="EC" id="2.7.11.22"/>
    </reaction>
</comment>
<comment type="catalytic activity">
    <reaction>
        <text>[DNA-directed RNA polymerase] + ATP = phospho-[DNA-directed RNA polymerase] + ADP + H(+)</text>
        <dbReference type="Rhea" id="RHEA:10216"/>
        <dbReference type="Rhea" id="RHEA-COMP:11321"/>
        <dbReference type="Rhea" id="RHEA-COMP:11322"/>
        <dbReference type="ChEBI" id="CHEBI:15378"/>
        <dbReference type="ChEBI" id="CHEBI:30616"/>
        <dbReference type="ChEBI" id="CHEBI:43176"/>
        <dbReference type="ChEBI" id="CHEBI:68546"/>
        <dbReference type="ChEBI" id="CHEBI:456216"/>
        <dbReference type="EC" id="2.7.11.23"/>
    </reaction>
</comment>
<comment type="activity regulation">
    <text evidence="1">Phosphorylation at Thr-14 or Tyr-15 inactivates the enzyme, while phosphorylation at Thr-161 activates it.</text>
</comment>
<comment type="similarity">
    <text evidence="4">Belongs to the protein kinase superfamily. CMGC Ser/Thr protein kinase family. CDC2/CDKX subfamily.</text>
</comment>
<protein>
    <recommendedName>
        <fullName>Cell division control protein 2 homolog</fullName>
        <ecNumber>2.7.11.22</ecNumber>
        <ecNumber>2.7.11.23</ecNumber>
    </recommendedName>
    <alternativeName>
        <fullName>p34cdc2</fullName>
    </alternativeName>
</protein>
<organism>
    <name type="scientific">Oxybasis rubra</name>
    <name type="common">Red goosefoot</name>
    <name type="synonym">Chenopodium rubrum</name>
    <dbReference type="NCBI Taxonomy" id="3560"/>
    <lineage>
        <taxon>Eukaryota</taxon>
        <taxon>Viridiplantae</taxon>
        <taxon>Streptophyta</taxon>
        <taxon>Embryophyta</taxon>
        <taxon>Tracheophyta</taxon>
        <taxon>Spermatophyta</taxon>
        <taxon>Magnoliopsida</taxon>
        <taxon>eudicotyledons</taxon>
        <taxon>Gunneridae</taxon>
        <taxon>Pentapetalae</taxon>
        <taxon>Caryophyllales</taxon>
        <taxon>Chenopodiaceae</taxon>
        <taxon>Chenopodioideae</taxon>
        <taxon>Atripliceae</taxon>
        <taxon>Oxybasis</taxon>
    </lineage>
</organism>
<dbReference type="EC" id="2.7.11.22"/>
<dbReference type="EC" id="2.7.11.23"/>
<dbReference type="EMBL" id="Y10160">
    <property type="protein sequence ID" value="CAA71242.1"/>
    <property type="molecule type" value="mRNA"/>
</dbReference>
<dbReference type="SMR" id="P93101"/>
<dbReference type="GO" id="GO:0000307">
    <property type="term" value="C:cyclin-dependent protein kinase holoenzyme complex"/>
    <property type="evidence" value="ECO:0007669"/>
    <property type="project" value="TreeGrafter"/>
</dbReference>
<dbReference type="GO" id="GO:0005737">
    <property type="term" value="C:cytoplasm"/>
    <property type="evidence" value="ECO:0007669"/>
    <property type="project" value="TreeGrafter"/>
</dbReference>
<dbReference type="GO" id="GO:0005634">
    <property type="term" value="C:nucleus"/>
    <property type="evidence" value="ECO:0007669"/>
    <property type="project" value="TreeGrafter"/>
</dbReference>
<dbReference type="GO" id="GO:0005524">
    <property type="term" value="F:ATP binding"/>
    <property type="evidence" value="ECO:0007669"/>
    <property type="project" value="UniProtKB-KW"/>
</dbReference>
<dbReference type="GO" id="GO:0030332">
    <property type="term" value="F:cyclin binding"/>
    <property type="evidence" value="ECO:0007669"/>
    <property type="project" value="TreeGrafter"/>
</dbReference>
<dbReference type="GO" id="GO:0004693">
    <property type="term" value="F:cyclin-dependent protein serine/threonine kinase activity"/>
    <property type="evidence" value="ECO:0007669"/>
    <property type="project" value="UniProtKB-EC"/>
</dbReference>
<dbReference type="GO" id="GO:0106310">
    <property type="term" value="F:protein serine kinase activity"/>
    <property type="evidence" value="ECO:0007669"/>
    <property type="project" value="RHEA"/>
</dbReference>
<dbReference type="GO" id="GO:0008353">
    <property type="term" value="F:RNA polymerase II CTD heptapeptide repeat kinase activity"/>
    <property type="evidence" value="ECO:0007669"/>
    <property type="project" value="UniProtKB-EC"/>
</dbReference>
<dbReference type="GO" id="GO:0051301">
    <property type="term" value="P:cell division"/>
    <property type="evidence" value="ECO:0007669"/>
    <property type="project" value="UniProtKB-KW"/>
</dbReference>
<dbReference type="GO" id="GO:0000082">
    <property type="term" value="P:G1/S transition of mitotic cell cycle"/>
    <property type="evidence" value="ECO:0007669"/>
    <property type="project" value="TreeGrafter"/>
</dbReference>
<dbReference type="GO" id="GO:0010389">
    <property type="term" value="P:regulation of G2/M transition of mitotic cell cycle"/>
    <property type="evidence" value="ECO:0007669"/>
    <property type="project" value="TreeGrafter"/>
</dbReference>
<dbReference type="GO" id="GO:0051445">
    <property type="term" value="P:regulation of meiotic cell cycle"/>
    <property type="evidence" value="ECO:0007669"/>
    <property type="project" value="TreeGrafter"/>
</dbReference>
<dbReference type="GO" id="GO:0007165">
    <property type="term" value="P:signal transduction"/>
    <property type="evidence" value="ECO:0007669"/>
    <property type="project" value="TreeGrafter"/>
</dbReference>
<dbReference type="CDD" id="cd07835">
    <property type="entry name" value="STKc_CDK1_CdkB_like"/>
    <property type="match status" value="1"/>
</dbReference>
<dbReference type="FunFam" id="3.30.200.20:FF:000187">
    <property type="entry name" value="Cell division control protein 2"/>
    <property type="match status" value="1"/>
</dbReference>
<dbReference type="FunFam" id="1.10.510.10:FF:000280">
    <property type="entry name" value="Cell division control protein 2 homolog"/>
    <property type="match status" value="1"/>
</dbReference>
<dbReference type="Gene3D" id="3.30.200.20">
    <property type="entry name" value="Phosphorylase Kinase, domain 1"/>
    <property type="match status" value="1"/>
</dbReference>
<dbReference type="Gene3D" id="1.10.510.10">
    <property type="entry name" value="Transferase(Phosphotransferase) domain 1"/>
    <property type="match status" value="1"/>
</dbReference>
<dbReference type="InterPro" id="IPR050108">
    <property type="entry name" value="CDK"/>
</dbReference>
<dbReference type="InterPro" id="IPR011009">
    <property type="entry name" value="Kinase-like_dom_sf"/>
</dbReference>
<dbReference type="InterPro" id="IPR000719">
    <property type="entry name" value="Prot_kinase_dom"/>
</dbReference>
<dbReference type="InterPro" id="IPR017441">
    <property type="entry name" value="Protein_kinase_ATP_BS"/>
</dbReference>
<dbReference type="InterPro" id="IPR008271">
    <property type="entry name" value="Ser/Thr_kinase_AS"/>
</dbReference>
<dbReference type="PANTHER" id="PTHR24056">
    <property type="entry name" value="CELL DIVISION PROTEIN KINASE"/>
    <property type="match status" value="1"/>
</dbReference>
<dbReference type="PANTHER" id="PTHR24056:SF548">
    <property type="entry name" value="CYCLIN-DEPENDENT KINASE A-1"/>
    <property type="match status" value="1"/>
</dbReference>
<dbReference type="Pfam" id="PF00069">
    <property type="entry name" value="Pkinase"/>
    <property type="match status" value="1"/>
</dbReference>
<dbReference type="SMART" id="SM00220">
    <property type="entry name" value="S_TKc"/>
    <property type="match status" value="1"/>
</dbReference>
<dbReference type="SUPFAM" id="SSF56112">
    <property type="entry name" value="Protein kinase-like (PK-like)"/>
    <property type="match status" value="1"/>
</dbReference>
<dbReference type="PROSITE" id="PS00107">
    <property type="entry name" value="PROTEIN_KINASE_ATP"/>
    <property type="match status" value="1"/>
</dbReference>
<dbReference type="PROSITE" id="PS50011">
    <property type="entry name" value="PROTEIN_KINASE_DOM"/>
    <property type="match status" value="1"/>
</dbReference>
<dbReference type="PROSITE" id="PS00108">
    <property type="entry name" value="PROTEIN_KINASE_ST"/>
    <property type="match status" value="1"/>
</dbReference>
<sequence length="294" mass="33832">MDQYEKVEKIGEGTYGVVYKARDKVTNETIALKKIRLEQEDEGVPSTAIREISLLKEMQHGNIVRLQDVVHSEKRLYLVFEYLDLDLKKHMDSCPDFAKDPRMIKRFLYQILRGIAYCHSHRVLHRDLKPQNLLIDRQTNALKLADFGLARAFGIPVRTFTHEVVTLWYRAPEILLGSRHYSTPVDVWSVGCIFAEMVNQKPLFPGDSEIDELFKIFRTLGTPNEETWPGVTSLPDFKSSFPKWISKDLSAVVPNLDPAGIDLLNKMLCLDPSKRITARNALEHEYFKDIGFVP</sequence>
<gene>
    <name type="primary">CDC2</name>
    <name type="synonym">CDK34</name>
</gene>
<keyword id="KW-0067">ATP-binding</keyword>
<keyword id="KW-0131">Cell cycle</keyword>
<keyword id="KW-0132">Cell division</keyword>
<keyword id="KW-0418">Kinase</keyword>
<keyword id="KW-0498">Mitosis</keyword>
<keyword id="KW-0547">Nucleotide-binding</keyword>
<keyword id="KW-0597">Phosphoprotein</keyword>
<keyword id="KW-0723">Serine/threonine-protein kinase</keyword>
<keyword id="KW-0808">Transferase</keyword>
<accession>P93101</accession>
<name>CDC2_OXYRB</name>
<proteinExistence type="evidence at transcript level"/>
<reference key="1">
    <citation type="online journal article" date="1997" name="Plant Gene Register">
        <title>Nucleotide sequence of a cDNA encoding a CDK34-protein kinase from a photoautotrophic cell suspension culture of Chenopodium rubrum L.</title>
        <authorList>
            <person name="Renz A."/>
            <person name="Schmelzl B."/>
            <person name="Beck E."/>
        </authorList>
        <locator>PGR97-045</locator>
    </citation>
    <scope>NUCLEOTIDE SEQUENCE [MRNA]</scope>
</reference>
<feature type="chain" id="PRO_0000085751" description="Cell division control protein 2 homolog">
    <location>
        <begin position="1"/>
        <end position="294"/>
    </location>
</feature>
<feature type="domain" description="Protein kinase" evidence="2">
    <location>
        <begin position="4"/>
        <end position="287"/>
    </location>
</feature>
<feature type="active site" description="Proton acceptor" evidence="2 3">
    <location>
        <position position="127"/>
    </location>
</feature>
<feature type="binding site" evidence="2">
    <location>
        <begin position="10"/>
        <end position="18"/>
    </location>
    <ligand>
        <name>ATP</name>
        <dbReference type="ChEBI" id="CHEBI:30616"/>
    </ligand>
</feature>
<feature type="binding site" evidence="2">
    <location>
        <position position="33"/>
    </location>
    <ligand>
        <name>ATP</name>
        <dbReference type="ChEBI" id="CHEBI:30616"/>
    </ligand>
</feature>
<feature type="modified residue" description="Phosphothreonine" evidence="1">
    <location>
        <position position="14"/>
    </location>
</feature>
<feature type="modified residue" description="Phosphotyrosine" evidence="1">
    <location>
        <position position="15"/>
    </location>
</feature>
<feature type="modified residue" description="Phosphothreonine; by CAK" evidence="1">
    <location>
        <position position="161"/>
    </location>
</feature>